<protein>
    <recommendedName>
        <fullName evidence="1">Large ribosomal subunit protein uL2</fullName>
    </recommendedName>
    <alternativeName>
        <fullName evidence="3">50S ribosomal protein L2</fullName>
    </alternativeName>
</protein>
<organism>
    <name type="scientific">Neisseria meningitidis serogroup C / serotype 2a (strain ATCC 700532 / DSM 15464 / FAM18)</name>
    <dbReference type="NCBI Taxonomy" id="272831"/>
    <lineage>
        <taxon>Bacteria</taxon>
        <taxon>Pseudomonadati</taxon>
        <taxon>Pseudomonadota</taxon>
        <taxon>Betaproteobacteria</taxon>
        <taxon>Neisseriales</taxon>
        <taxon>Neisseriaceae</taxon>
        <taxon>Neisseria</taxon>
    </lineage>
</organism>
<gene>
    <name evidence="1" type="primary">rplB</name>
    <name type="ordered locus">NMC0135</name>
</gene>
<proteinExistence type="inferred from homology"/>
<name>RL2_NEIMF</name>
<dbReference type="EMBL" id="AM421808">
    <property type="protein sequence ID" value="CAM09454.1"/>
    <property type="molecule type" value="Genomic_DNA"/>
</dbReference>
<dbReference type="RefSeq" id="WP_002215409.1">
    <property type="nucleotide sequence ID" value="NC_008767.1"/>
</dbReference>
<dbReference type="SMR" id="A1KRH6"/>
<dbReference type="KEGG" id="nmc:NMC0135"/>
<dbReference type="HOGENOM" id="CLU_036235_2_1_4"/>
<dbReference type="Proteomes" id="UP000002286">
    <property type="component" value="Chromosome"/>
</dbReference>
<dbReference type="GO" id="GO:0015934">
    <property type="term" value="C:large ribosomal subunit"/>
    <property type="evidence" value="ECO:0007669"/>
    <property type="project" value="InterPro"/>
</dbReference>
<dbReference type="GO" id="GO:0019843">
    <property type="term" value="F:rRNA binding"/>
    <property type="evidence" value="ECO:0007669"/>
    <property type="project" value="UniProtKB-UniRule"/>
</dbReference>
<dbReference type="GO" id="GO:0003735">
    <property type="term" value="F:structural constituent of ribosome"/>
    <property type="evidence" value="ECO:0007669"/>
    <property type="project" value="InterPro"/>
</dbReference>
<dbReference type="GO" id="GO:0016740">
    <property type="term" value="F:transferase activity"/>
    <property type="evidence" value="ECO:0007669"/>
    <property type="project" value="InterPro"/>
</dbReference>
<dbReference type="GO" id="GO:0002181">
    <property type="term" value="P:cytoplasmic translation"/>
    <property type="evidence" value="ECO:0007669"/>
    <property type="project" value="TreeGrafter"/>
</dbReference>
<dbReference type="FunFam" id="2.30.30.30:FF:000001">
    <property type="entry name" value="50S ribosomal protein L2"/>
    <property type="match status" value="1"/>
</dbReference>
<dbReference type="FunFam" id="2.40.50.140:FF:000003">
    <property type="entry name" value="50S ribosomal protein L2"/>
    <property type="match status" value="1"/>
</dbReference>
<dbReference type="FunFam" id="4.10.950.10:FF:000001">
    <property type="entry name" value="50S ribosomal protein L2"/>
    <property type="match status" value="1"/>
</dbReference>
<dbReference type="Gene3D" id="2.30.30.30">
    <property type="match status" value="1"/>
</dbReference>
<dbReference type="Gene3D" id="2.40.50.140">
    <property type="entry name" value="Nucleic acid-binding proteins"/>
    <property type="match status" value="1"/>
</dbReference>
<dbReference type="Gene3D" id="4.10.950.10">
    <property type="entry name" value="Ribosomal protein L2, domain 3"/>
    <property type="match status" value="1"/>
</dbReference>
<dbReference type="HAMAP" id="MF_01320_B">
    <property type="entry name" value="Ribosomal_uL2_B"/>
    <property type="match status" value="1"/>
</dbReference>
<dbReference type="InterPro" id="IPR012340">
    <property type="entry name" value="NA-bd_OB-fold"/>
</dbReference>
<dbReference type="InterPro" id="IPR014722">
    <property type="entry name" value="Rib_uL2_dom2"/>
</dbReference>
<dbReference type="InterPro" id="IPR002171">
    <property type="entry name" value="Ribosomal_uL2"/>
</dbReference>
<dbReference type="InterPro" id="IPR005880">
    <property type="entry name" value="Ribosomal_uL2_bac/org-type"/>
</dbReference>
<dbReference type="InterPro" id="IPR022669">
    <property type="entry name" value="Ribosomal_uL2_C"/>
</dbReference>
<dbReference type="InterPro" id="IPR022671">
    <property type="entry name" value="Ribosomal_uL2_CS"/>
</dbReference>
<dbReference type="InterPro" id="IPR014726">
    <property type="entry name" value="Ribosomal_uL2_dom3"/>
</dbReference>
<dbReference type="InterPro" id="IPR022666">
    <property type="entry name" value="Ribosomal_uL2_RNA-bd_dom"/>
</dbReference>
<dbReference type="InterPro" id="IPR008991">
    <property type="entry name" value="Translation_prot_SH3-like_sf"/>
</dbReference>
<dbReference type="NCBIfam" id="TIGR01171">
    <property type="entry name" value="rplB_bact"/>
    <property type="match status" value="1"/>
</dbReference>
<dbReference type="PANTHER" id="PTHR13691:SF5">
    <property type="entry name" value="LARGE RIBOSOMAL SUBUNIT PROTEIN UL2M"/>
    <property type="match status" value="1"/>
</dbReference>
<dbReference type="PANTHER" id="PTHR13691">
    <property type="entry name" value="RIBOSOMAL PROTEIN L2"/>
    <property type="match status" value="1"/>
</dbReference>
<dbReference type="Pfam" id="PF00181">
    <property type="entry name" value="Ribosomal_L2"/>
    <property type="match status" value="1"/>
</dbReference>
<dbReference type="Pfam" id="PF03947">
    <property type="entry name" value="Ribosomal_L2_C"/>
    <property type="match status" value="1"/>
</dbReference>
<dbReference type="PIRSF" id="PIRSF002158">
    <property type="entry name" value="Ribosomal_L2"/>
    <property type="match status" value="1"/>
</dbReference>
<dbReference type="SMART" id="SM01383">
    <property type="entry name" value="Ribosomal_L2"/>
    <property type="match status" value="1"/>
</dbReference>
<dbReference type="SMART" id="SM01382">
    <property type="entry name" value="Ribosomal_L2_C"/>
    <property type="match status" value="1"/>
</dbReference>
<dbReference type="SUPFAM" id="SSF50249">
    <property type="entry name" value="Nucleic acid-binding proteins"/>
    <property type="match status" value="1"/>
</dbReference>
<dbReference type="SUPFAM" id="SSF50104">
    <property type="entry name" value="Translation proteins SH3-like domain"/>
    <property type="match status" value="1"/>
</dbReference>
<dbReference type="PROSITE" id="PS00467">
    <property type="entry name" value="RIBOSOMAL_L2"/>
    <property type="match status" value="1"/>
</dbReference>
<feature type="chain" id="PRO_0000309966" description="Large ribosomal subunit protein uL2">
    <location>
        <begin position="1"/>
        <end position="277"/>
    </location>
</feature>
<feature type="region of interest" description="Disordered" evidence="2">
    <location>
        <begin position="37"/>
        <end position="60"/>
    </location>
</feature>
<feature type="region of interest" description="Disordered" evidence="2">
    <location>
        <begin position="223"/>
        <end position="265"/>
    </location>
</feature>
<feature type="compositionally biased region" description="Polar residues" evidence="2">
    <location>
        <begin position="39"/>
        <end position="49"/>
    </location>
</feature>
<feature type="compositionally biased region" description="Basic residues" evidence="2">
    <location>
        <begin position="50"/>
        <end position="60"/>
    </location>
</feature>
<feature type="compositionally biased region" description="Basic and acidic residues" evidence="2">
    <location>
        <begin position="229"/>
        <end position="244"/>
    </location>
</feature>
<evidence type="ECO:0000255" key="1">
    <source>
        <dbReference type="HAMAP-Rule" id="MF_01320"/>
    </source>
</evidence>
<evidence type="ECO:0000256" key="2">
    <source>
        <dbReference type="SAM" id="MobiDB-lite"/>
    </source>
</evidence>
<evidence type="ECO:0000305" key="3"/>
<accession>A1KRH6</accession>
<sequence length="277" mass="30098">MAIVKMKPTSAGRRGMVRVVTEGLHKGAPYAPLLEKKNSTAGRNNNGHITTRHKGGGHKHHYRVVDFKRNKDGIPAKVERIEYDPNRTAFIALLCYADGERRYIIAPRGIQAGAVLVSGAEAAIKVGNTLPIRNIPVGTTIHCIEMKPGKGAQIARSAGASAVLLAKEGAYAQVRLRSGEVRKINVNCRATIGEVGNEEQSLKKIGKAGANRWRGIRPTVRGVVMNPVDHPHGGGEGRTGEAREPVSPWGTPAKGYRTRNNKRTDNMIVRRRYSNKG</sequence>
<reference key="1">
    <citation type="journal article" date="2007" name="PLoS Genet.">
        <title>Meningococcal genetic variation mechanisms viewed through comparative analysis of serogroup C strain FAM18.</title>
        <authorList>
            <person name="Bentley S.D."/>
            <person name="Vernikos G.S."/>
            <person name="Snyder L.A.S."/>
            <person name="Churcher C."/>
            <person name="Arrowsmith C."/>
            <person name="Chillingworth T."/>
            <person name="Cronin A."/>
            <person name="Davis P.H."/>
            <person name="Holroyd N.E."/>
            <person name="Jagels K."/>
            <person name="Maddison M."/>
            <person name="Moule S."/>
            <person name="Rabbinowitsch E."/>
            <person name="Sharp S."/>
            <person name="Unwin L."/>
            <person name="Whitehead S."/>
            <person name="Quail M.A."/>
            <person name="Achtman M."/>
            <person name="Barrell B.G."/>
            <person name="Saunders N.J."/>
            <person name="Parkhill J."/>
        </authorList>
    </citation>
    <scope>NUCLEOTIDE SEQUENCE [LARGE SCALE GENOMIC DNA]</scope>
    <source>
        <strain>ATCC 700532 / DSM 15464 / FAM18</strain>
    </source>
</reference>
<comment type="function">
    <text evidence="1">One of the primary rRNA binding proteins. Required for association of the 30S and 50S subunits to form the 70S ribosome, for tRNA binding and peptide bond formation. It has been suggested to have peptidyltransferase activity; this is somewhat controversial. Makes several contacts with the 16S rRNA in the 70S ribosome.</text>
</comment>
<comment type="subunit">
    <text evidence="1">Part of the 50S ribosomal subunit. Forms a bridge to the 30S subunit in the 70S ribosome.</text>
</comment>
<comment type="similarity">
    <text evidence="1">Belongs to the universal ribosomal protein uL2 family.</text>
</comment>
<keyword id="KW-0687">Ribonucleoprotein</keyword>
<keyword id="KW-0689">Ribosomal protein</keyword>
<keyword id="KW-0694">RNA-binding</keyword>
<keyword id="KW-0699">rRNA-binding</keyword>